<dbReference type="EMBL" id="CP000494">
    <property type="protein sequence ID" value="ABQ36672.1"/>
    <property type="molecule type" value="Genomic_DNA"/>
</dbReference>
<dbReference type="RefSeq" id="WP_012044662.1">
    <property type="nucleotide sequence ID" value="NC_009485.1"/>
</dbReference>
<dbReference type="SMR" id="A5EKH8"/>
<dbReference type="STRING" id="288000.BBta_4644"/>
<dbReference type="KEGG" id="bbt:BBta_4644"/>
<dbReference type="eggNOG" id="COG0781">
    <property type="taxonomic scope" value="Bacteria"/>
</dbReference>
<dbReference type="HOGENOM" id="CLU_087843_4_0_5"/>
<dbReference type="OrthoDB" id="9797817at2"/>
<dbReference type="Proteomes" id="UP000000246">
    <property type="component" value="Chromosome"/>
</dbReference>
<dbReference type="GO" id="GO:0005829">
    <property type="term" value="C:cytosol"/>
    <property type="evidence" value="ECO:0007669"/>
    <property type="project" value="TreeGrafter"/>
</dbReference>
<dbReference type="GO" id="GO:0003723">
    <property type="term" value="F:RNA binding"/>
    <property type="evidence" value="ECO:0007669"/>
    <property type="project" value="UniProtKB-UniRule"/>
</dbReference>
<dbReference type="GO" id="GO:0006353">
    <property type="term" value="P:DNA-templated transcription termination"/>
    <property type="evidence" value="ECO:0007669"/>
    <property type="project" value="UniProtKB-UniRule"/>
</dbReference>
<dbReference type="GO" id="GO:0031564">
    <property type="term" value="P:transcription antitermination"/>
    <property type="evidence" value="ECO:0007669"/>
    <property type="project" value="UniProtKB-KW"/>
</dbReference>
<dbReference type="Gene3D" id="1.10.940.10">
    <property type="entry name" value="NusB-like"/>
    <property type="match status" value="1"/>
</dbReference>
<dbReference type="HAMAP" id="MF_00073">
    <property type="entry name" value="NusB"/>
    <property type="match status" value="1"/>
</dbReference>
<dbReference type="InterPro" id="IPR035926">
    <property type="entry name" value="NusB-like_sf"/>
</dbReference>
<dbReference type="InterPro" id="IPR011605">
    <property type="entry name" value="NusB_fam"/>
</dbReference>
<dbReference type="InterPro" id="IPR006027">
    <property type="entry name" value="NusB_RsmB_TIM44"/>
</dbReference>
<dbReference type="NCBIfam" id="TIGR01951">
    <property type="entry name" value="nusB"/>
    <property type="match status" value="1"/>
</dbReference>
<dbReference type="PANTHER" id="PTHR11078:SF3">
    <property type="entry name" value="ANTITERMINATION NUSB DOMAIN-CONTAINING PROTEIN"/>
    <property type="match status" value="1"/>
</dbReference>
<dbReference type="PANTHER" id="PTHR11078">
    <property type="entry name" value="N UTILIZATION SUBSTANCE PROTEIN B-RELATED"/>
    <property type="match status" value="1"/>
</dbReference>
<dbReference type="Pfam" id="PF01029">
    <property type="entry name" value="NusB"/>
    <property type="match status" value="1"/>
</dbReference>
<dbReference type="SUPFAM" id="SSF48013">
    <property type="entry name" value="NusB-like"/>
    <property type="match status" value="1"/>
</dbReference>
<keyword id="KW-1185">Reference proteome</keyword>
<keyword id="KW-0694">RNA-binding</keyword>
<keyword id="KW-0804">Transcription</keyword>
<keyword id="KW-0889">Transcription antitermination</keyword>
<keyword id="KW-0805">Transcription regulation</keyword>
<accession>A5EKH8</accession>
<feature type="chain" id="PRO_1000057493" description="Transcription antitermination protein NusB">
    <location>
        <begin position="1"/>
        <end position="169"/>
    </location>
</feature>
<feature type="region of interest" description="Disordered" evidence="2">
    <location>
        <begin position="1"/>
        <end position="20"/>
    </location>
</feature>
<proteinExistence type="inferred from homology"/>
<evidence type="ECO:0000255" key="1">
    <source>
        <dbReference type="HAMAP-Rule" id="MF_00073"/>
    </source>
</evidence>
<evidence type="ECO:0000256" key="2">
    <source>
        <dbReference type="SAM" id="MobiDB-lite"/>
    </source>
</evidence>
<sequence length="169" mass="18823">MAESSNKPFRGPVRANDRKANRRGAARLAAVQALYQMDIAGAGINDVLAEFESHWLGSEVEGEQYLPAEAAFFRDIVSGVVRDQTKIDPVLDTALERGWPLQRIEAILRAVLRAGAYELERRKDVPAKVVVSEYVDIAHAFVERDETGMVNAVLEQLARQYRADEMGPK</sequence>
<name>NUSB_BRASB</name>
<gene>
    <name evidence="1" type="primary">nusB</name>
    <name type="ordered locus">BBta_4644</name>
</gene>
<protein>
    <recommendedName>
        <fullName evidence="1">Transcription antitermination protein NusB</fullName>
    </recommendedName>
    <alternativeName>
        <fullName evidence="1">Antitermination factor NusB</fullName>
    </alternativeName>
</protein>
<comment type="function">
    <text evidence="1">Involved in transcription antitermination. Required for transcription of ribosomal RNA (rRNA) genes. Binds specifically to the boxA antiterminator sequence of the ribosomal RNA (rrn) operons.</text>
</comment>
<comment type="similarity">
    <text evidence="1">Belongs to the NusB family.</text>
</comment>
<reference key="1">
    <citation type="journal article" date="2007" name="Science">
        <title>Legumes symbioses: absence of nod genes in photosynthetic bradyrhizobia.</title>
        <authorList>
            <person name="Giraud E."/>
            <person name="Moulin L."/>
            <person name="Vallenet D."/>
            <person name="Barbe V."/>
            <person name="Cytryn E."/>
            <person name="Avarre J.-C."/>
            <person name="Jaubert M."/>
            <person name="Simon D."/>
            <person name="Cartieaux F."/>
            <person name="Prin Y."/>
            <person name="Bena G."/>
            <person name="Hannibal L."/>
            <person name="Fardoux J."/>
            <person name="Kojadinovic M."/>
            <person name="Vuillet L."/>
            <person name="Lajus A."/>
            <person name="Cruveiller S."/>
            <person name="Rouy Z."/>
            <person name="Mangenot S."/>
            <person name="Segurens B."/>
            <person name="Dossat C."/>
            <person name="Franck W.L."/>
            <person name="Chang W.-S."/>
            <person name="Saunders E."/>
            <person name="Bruce D."/>
            <person name="Richardson P."/>
            <person name="Normand P."/>
            <person name="Dreyfus B."/>
            <person name="Pignol D."/>
            <person name="Stacey G."/>
            <person name="Emerich D."/>
            <person name="Vermeglio A."/>
            <person name="Medigue C."/>
            <person name="Sadowsky M."/>
        </authorList>
    </citation>
    <scope>NUCLEOTIDE SEQUENCE [LARGE SCALE GENOMIC DNA]</scope>
    <source>
        <strain>BTAi1 / ATCC BAA-1182</strain>
    </source>
</reference>
<organism>
    <name type="scientific">Bradyrhizobium sp. (strain BTAi1 / ATCC BAA-1182)</name>
    <dbReference type="NCBI Taxonomy" id="288000"/>
    <lineage>
        <taxon>Bacteria</taxon>
        <taxon>Pseudomonadati</taxon>
        <taxon>Pseudomonadota</taxon>
        <taxon>Alphaproteobacteria</taxon>
        <taxon>Hyphomicrobiales</taxon>
        <taxon>Nitrobacteraceae</taxon>
        <taxon>Bradyrhizobium</taxon>
    </lineage>
</organism>